<name>BL1S4_YEAS1</name>
<sequence>MQDNSSHSRESASAGDDPLGIDKLTVDYDYLLYKIRDYVQSIQLDTTELCKKQNEVMVNGIIENTIDKNIAKFKELLEKCDTLENHYEMLNQLAIITDTFKERIAEAVNNYNSLKKGASKSK</sequence>
<comment type="function">
    <text evidence="1">Component of the biogenesis of lysosome-related organelles complex-1 (BLOC-1), a complex that is involved in endosomal cargo sorting.</text>
</comment>
<comment type="subunit">
    <text evidence="1">Component of the biogenesis of lysosome-related organelles complex-1 (BLOC-1) composed of at least BLI1, BLS1, CNL1, KXD1, SNN1 and VAB2.</text>
</comment>
<comment type="subcellular location">
    <subcellularLocation>
        <location evidence="1">Cytoplasm</location>
    </subcellularLocation>
    <text evidence="1">Punctate pattern.</text>
</comment>
<comment type="similarity">
    <text evidence="4">Belongs to the BLOC1S4 family.</text>
</comment>
<feature type="chain" id="PRO_0000410646" description="Biogenesis of lysosome-related organelles complex 1 subunit CNL1">
    <location>
        <begin position="1"/>
        <end position="122"/>
    </location>
</feature>
<feature type="region of interest" description="Disordered" evidence="3">
    <location>
        <begin position="1"/>
        <end position="21"/>
    </location>
</feature>
<feature type="coiled-coil region" evidence="2">
    <location>
        <begin position="63"/>
        <end position="95"/>
    </location>
</feature>
<feature type="compositionally biased region" description="Basic and acidic residues" evidence="3">
    <location>
        <begin position="1"/>
        <end position="10"/>
    </location>
</feature>
<accession>B3LFU5</accession>
<proteinExistence type="inferred from homology"/>
<organism>
    <name type="scientific">Saccharomyces cerevisiae (strain RM11-1a)</name>
    <name type="common">Baker's yeast</name>
    <dbReference type="NCBI Taxonomy" id="285006"/>
    <lineage>
        <taxon>Eukaryota</taxon>
        <taxon>Fungi</taxon>
        <taxon>Dikarya</taxon>
        <taxon>Ascomycota</taxon>
        <taxon>Saccharomycotina</taxon>
        <taxon>Saccharomycetes</taxon>
        <taxon>Saccharomycetales</taxon>
        <taxon>Saccharomycetaceae</taxon>
        <taxon>Saccharomyces</taxon>
    </lineage>
</organism>
<gene>
    <name type="primary">CLN1</name>
    <name type="ORF">SCRG_00175</name>
</gene>
<reference key="1">
    <citation type="submission" date="2005-03" db="EMBL/GenBank/DDBJ databases">
        <title>Annotation of the Saccharomyces cerevisiae RM11-1a genome.</title>
        <authorList>
            <consortium name="The Broad Institute Genome Sequencing Platform"/>
            <person name="Birren B.W."/>
            <person name="Lander E.S."/>
            <person name="Galagan J.E."/>
            <person name="Nusbaum C."/>
            <person name="Devon K."/>
            <person name="Cuomo C."/>
            <person name="Jaffe D.B."/>
            <person name="Butler J."/>
            <person name="Alvarez P."/>
            <person name="Gnerre S."/>
            <person name="Grabherr M."/>
            <person name="Kleber M."/>
            <person name="Mauceli E.W."/>
            <person name="Brockman W."/>
            <person name="MacCallum I.A."/>
            <person name="Rounsley S."/>
            <person name="Young S.K."/>
            <person name="LaButti K."/>
            <person name="Pushparaj V."/>
            <person name="DeCaprio D."/>
            <person name="Crawford M."/>
            <person name="Koehrsen M."/>
            <person name="Engels R."/>
            <person name="Montgomery P."/>
            <person name="Pearson M."/>
            <person name="Howarth C."/>
            <person name="Larson L."/>
            <person name="Luoma S."/>
            <person name="White J."/>
            <person name="O'Leary S."/>
            <person name="Kodira C.D."/>
            <person name="Zeng Q."/>
            <person name="Yandava C."/>
            <person name="Alvarado L."/>
            <person name="Pratt S."/>
            <person name="Kruglyak L."/>
        </authorList>
    </citation>
    <scope>NUCLEOTIDE SEQUENCE [LARGE SCALE GENOMIC DNA]</scope>
    <source>
        <strain>RM11-1a</strain>
    </source>
</reference>
<keyword id="KW-0175">Coiled coil</keyword>
<keyword id="KW-0963">Cytoplasm</keyword>
<keyword id="KW-0813">Transport</keyword>
<protein>
    <recommendedName>
        <fullName>Biogenesis of lysosome-related organelles complex 1 subunit CNL1</fullName>
        <shortName>BLOC-1 subunit CNL1</shortName>
    </recommendedName>
    <alternativeName>
        <fullName>CNO-like protein 1</fullName>
    </alternativeName>
</protein>
<evidence type="ECO:0000250" key="1"/>
<evidence type="ECO:0000255" key="2"/>
<evidence type="ECO:0000256" key="3">
    <source>
        <dbReference type="SAM" id="MobiDB-lite"/>
    </source>
</evidence>
<evidence type="ECO:0000305" key="4"/>
<dbReference type="EMBL" id="CH408043">
    <property type="protein sequence ID" value="EDV07974.1"/>
    <property type="molecule type" value="Genomic_DNA"/>
</dbReference>
<dbReference type="SMR" id="B3LFU5"/>
<dbReference type="HOGENOM" id="CLU_141728_1_0_1"/>
<dbReference type="OrthoDB" id="35127at4893"/>
<dbReference type="Proteomes" id="UP000008335">
    <property type="component" value="Unassembled WGS sequence"/>
</dbReference>
<dbReference type="GO" id="GO:0031083">
    <property type="term" value="C:BLOC-1 complex"/>
    <property type="evidence" value="ECO:0007669"/>
    <property type="project" value="InterPro"/>
</dbReference>
<dbReference type="GO" id="GO:0005737">
    <property type="term" value="C:cytoplasm"/>
    <property type="evidence" value="ECO:0007669"/>
    <property type="project" value="UniProtKB-SubCell"/>
</dbReference>
<dbReference type="GO" id="GO:0007032">
    <property type="term" value="P:endosome organization"/>
    <property type="evidence" value="ECO:0007669"/>
    <property type="project" value="TreeGrafter"/>
</dbReference>
<dbReference type="CDD" id="cd24144">
    <property type="entry name" value="BLOC1_CNL1"/>
    <property type="match status" value="1"/>
</dbReference>
<dbReference type="InterPro" id="IPR034455">
    <property type="entry name" value="CNL1"/>
</dbReference>
<dbReference type="PANTHER" id="PTHR39145">
    <property type="entry name" value="BIOGENESIS OF LYSOSOME-RELATED ORGANELLES COMPLEX 1 SUBUNIT CNL1"/>
    <property type="match status" value="1"/>
</dbReference>
<dbReference type="PANTHER" id="PTHR39145:SF1">
    <property type="entry name" value="BIOGENESIS OF LYSOSOME-RELATED ORGANELLES COMPLEX 1 SUBUNIT CNL1"/>
    <property type="match status" value="1"/>
</dbReference>